<feature type="chain" id="PRO_0000176695" description="Large ribosomal subunit protein bL9">
    <location>
        <begin position="1"/>
        <end position="149"/>
    </location>
</feature>
<comment type="function">
    <text evidence="1">Binds to the 23S rRNA.</text>
</comment>
<comment type="similarity">
    <text evidence="1">Belongs to the bacterial ribosomal protein bL9 family.</text>
</comment>
<accession>Q9WZW7</accession>
<keyword id="KW-1185">Reference proteome</keyword>
<keyword id="KW-0687">Ribonucleoprotein</keyword>
<keyword id="KW-0689">Ribosomal protein</keyword>
<keyword id="KW-0694">RNA-binding</keyword>
<keyword id="KW-0699">rRNA-binding</keyword>
<reference key="1">
    <citation type="journal article" date="1999" name="Nature">
        <title>Evidence for lateral gene transfer between Archaea and Bacteria from genome sequence of Thermotoga maritima.</title>
        <authorList>
            <person name="Nelson K.E."/>
            <person name="Clayton R.A."/>
            <person name="Gill S.R."/>
            <person name="Gwinn M.L."/>
            <person name="Dodson R.J."/>
            <person name="Haft D.H."/>
            <person name="Hickey E.K."/>
            <person name="Peterson J.D."/>
            <person name="Nelson W.C."/>
            <person name="Ketchum K.A."/>
            <person name="McDonald L.A."/>
            <person name="Utterback T.R."/>
            <person name="Malek J.A."/>
            <person name="Linher K.D."/>
            <person name="Garrett M.M."/>
            <person name="Stewart A.M."/>
            <person name="Cotton M.D."/>
            <person name="Pratt M.S."/>
            <person name="Phillips C.A."/>
            <person name="Richardson D.L."/>
            <person name="Heidelberg J.F."/>
            <person name="Sutton G.G."/>
            <person name="Fleischmann R.D."/>
            <person name="Eisen J.A."/>
            <person name="White O."/>
            <person name="Salzberg S.L."/>
            <person name="Smith H.O."/>
            <person name="Venter J.C."/>
            <person name="Fraser C.M."/>
        </authorList>
    </citation>
    <scope>NUCLEOTIDE SEQUENCE [LARGE SCALE GENOMIC DNA]</scope>
    <source>
        <strain>ATCC 43589 / DSM 3109 / JCM 10099 / NBRC 100826 / MSB8</strain>
    </source>
</reference>
<organism>
    <name type="scientific">Thermotoga maritima (strain ATCC 43589 / DSM 3109 / JCM 10099 / NBRC 100826 / MSB8)</name>
    <dbReference type="NCBI Taxonomy" id="243274"/>
    <lineage>
        <taxon>Bacteria</taxon>
        <taxon>Thermotogati</taxon>
        <taxon>Thermotogota</taxon>
        <taxon>Thermotogae</taxon>
        <taxon>Thermotogales</taxon>
        <taxon>Thermotogaceae</taxon>
        <taxon>Thermotoga</taxon>
    </lineage>
</organism>
<dbReference type="EMBL" id="AE000512">
    <property type="protein sequence ID" value="AAD35945.1"/>
    <property type="molecule type" value="Genomic_DNA"/>
</dbReference>
<dbReference type="PIR" id="B72322">
    <property type="entry name" value="B72322"/>
</dbReference>
<dbReference type="RefSeq" id="NP_228672.1">
    <property type="nucleotide sequence ID" value="NC_000853.1"/>
</dbReference>
<dbReference type="RefSeq" id="WP_004080743.1">
    <property type="nucleotide sequence ID" value="NZ_CP011107.1"/>
</dbReference>
<dbReference type="SMR" id="Q9WZW7"/>
<dbReference type="FunCoup" id="Q9WZW7">
    <property type="interactions" value="443"/>
</dbReference>
<dbReference type="STRING" id="243274.TM_0863"/>
<dbReference type="PaxDb" id="243274-THEMA_00320"/>
<dbReference type="EnsemblBacteria" id="AAD35945">
    <property type="protein sequence ID" value="AAD35945"/>
    <property type="gene ID" value="TM_0863"/>
</dbReference>
<dbReference type="KEGG" id="tma:TM0863"/>
<dbReference type="KEGG" id="tmi:THEMA_00320"/>
<dbReference type="KEGG" id="tmm:Tmari_0865"/>
<dbReference type="KEGG" id="tmw:THMA_0885"/>
<dbReference type="eggNOG" id="COG0359">
    <property type="taxonomic scope" value="Bacteria"/>
</dbReference>
<dbReference type="InParanoid" id="Q9WZW7"/>
<dbReference type="OrthoDB" id="9788336at2"/>
<dbReference type="Proteomes" id="UP000008183">
    <property type="component" value="Chromosome"/>
</dbReference>
<dbReference type="GO" id="GO:0022625">
    <property type="term" value="C:cytosolic large ribosomal subunit"/>
    <property type="evidence" value="ECO:0000318"/>
    <property type="project" value="GO_Central"/>
</dbReference>
<dbReference type="GO" id="GO:0019843">
    <property type="term" value="F:rRNA binding"/>
    <property type="evidence" value="ECO:0007669"/>
    <property type="project" value="UniProtKB-UniRule"/>
</dbReference>
<dbReference type="GO" id="GO:0003735">
    <property type="term" value="F:structural constituent of ribosome"/>
    <property type="evidence" value="ECO:0007669"/>
    <property type="project" value="InterPro"/>
</dbReference>
<dbReference type="GO" id="GO:0006412">
    <property type="term" value="P:translation"/>
    <property type="evidence" value="ECO:0007669"/>
    <property type="project" value="UniProtKB-UniRule"/>
</dbReference>
<dbReference type="FunFam" id="3.40.5.10:FF:000002">
    <property type="entry name" value="50S ribosomal protein L9"/>
    <property type="match status" value="1"/>
</dbReference>
<dbReference type="Gene3D" id="3.10.430.100">
    <property type="entry name" value="Ribosomal protein L9, C-terminal domain"/>
    <property type="match status" value="1"/>
</dbReference>
<dbReference type="Gene3D" id="3.40.5.10">
    <property type="entry name" value="Ribosomal protein L9, N-terminal domain"/>
    <property type="match status" value="1"/>
</dbReference>
<dbReference type="HAMAP" id="MF_00503">
    <property type="entry name" value="Ribosomal_bL9"/>
    <property type="match status" value="1"/>
</dbReference>
<dbReference type="InterPro" id="IPR000244">
    <property type="entry name" value="Ribosomal_bL9"/>
</dbReference>
<dbReference type="InterPro" id="IPR009027">
    <property type="entry name" value="Ribosomal_bL9/RNase_H1_N"/>
</dbReference>
<dbReference type="InterPro" id="IPR020594">
    <property type="entry name" value="Ribosomal_bL9_bac/chp"/>
</dbReference>
<dbReference type="InterPro" id="IPR020069">
    <property type="entry name" value="Ribosomal_bL9_C"/>
</dbReference>
<dbReference type="InterPro" id="IPR036791">
    <property type="entry name" value="Ribosomal_bL9_C_sf"/>
</dbReference>
<dbReference type="InterPro" id="IPR020070">
    <property type="entry name" value="Ribosomal_bL9_N"/>
</dbReference>
<dbReference type="InterPro" id="IPR036935">
    <property type="entry name" value="Ribosomal_bL9_N_sf"/>
</dbReference>
<dbReference type="NCBIfam" id="TIGR00158">
    <property type="entry name" value="L9"/>
    <property type="match status" value="1"/>
</dbReference>
<dbReference type="PANTHER" id="PTHR21368">
    <property type="entry name" value="50S RIBOSOMAL PROTEIN L9"/>
    <property type="match status" value="1"/>
</dbReference>
<dbReference type="Pfam" id="PF03948">
    <property type="entry name" value="Ribosomal_L9_C"/>
    <property type="match status" value="1"/>
</dbReference>
<dbReference type="Pfam" id="PF01281">
    <property type="entry name" value="Ribosomal_L9_N"/>
    <property type="match status" value="1"/>
</dbReference>
<dbReference type="SUPFAM" id="SSF55658">
    <property type="entry name" value="L9 N-domain-like"/>
    <property type="match status" value="1"/>
</dbReference>
<dbReference type="SUPFAM" id="SSF55653">
    <property type="entry name" value="Ribosomal protein L9 C-domain"/>
    <property type="match status" value="1"/>
</dbReference>
<dbReference type="PROSITE" id="PS00651">
    <property type="entry name" value="RIBOSOMAL_L9"/>
    <property type="match status" value="1"/>
</dbReference>
<protein>
    <recommendedName>
        <fullName evidence="1">Large ribosomal subunit protein bL9</fullName>
    </recommendedName>
    <alternativeName>
        <fullName evidence="2">50S ribosomal protein L9</fullName>
    </alternativeName>
</protein>
<proteinExistence type="inferred from homology"/>
<evidence type="ECO:0000255" key="1">
    <source>
        <dbReference type="HAMAP-Rule" id="MF_00503"/>
    </source>
</evidence>
<evidence type="ECO:0000305" key="2"/>
<sequence length="149" mass="17062">MKVILLRDVPKIGKKGEIKEVSDGYARNYLIPRGFAKEYTEGLERAIKHEKEIEKRKKEREREESEKILKELKKRTHVVKVKAGEGGKIFGAVTAATVAEEISKTTGLKLDKRWFKLDKPIKELGEYSLEVSLPGGVKDTIKIRVEREE</sequence>
<gene>
    <name evidence="1" type="primary">rplI</name>
    <name type="ordered locus">TM_0863</name>
</gene>
<name>RL9_THEMA</name>